<keyword id="KW-0066">ATP synthesis</keyword>
<keyword id="KW-0997">Cell inner membrane</keyword>
<keyword id="KW-1003">Cell membrane</keyword>
<keyword id="KW-0139">CF(1)</keyword>
<keyword id="KW-0375">Hydrogen ion transport</keyword>
<keyword id="KW-0406">Ion transport</keyword>
<keyword id="KW-0472">Membrane</keyword>
<keyword id="KW-1185">Reference proteome</keyword>
<keyword id="KW-0813">Transport</keyword>
<protein>
    <recommendedName>
        <fullName evidence="1">ATP synthase subunit delta</fullName>
    </recommendedName>
    <alternativeName>
        <fullName evidence="1">ATP synthase F(1) sector subunit delta</fullName>
    </alternativeName>
    <alternativeName>
        <fullName evidence="1">F-type ATPase subunit delta</fullName>
        <shortName evidence="1">F-ATPase subunit delta</shortName>
    </alternativeName>
</protein>
<reference key="1">
    <citation type="journal article" date="2007" name="Nat. Biotechnol.">
        <title>Complete genome sequence of the fish pathogen Flavobacterium psychrophilum.</title>
        <authorList>
            <person name="Duchaud E."/>
            <person name="Boussaha M."/>
            <person name="Loux V."/>
            <person name="Bernardet J.-F."/>
            <person name="Michel C."/>
            <person name="Kerouault B."/>
            <person name="Mondot S."/>
            <person name="Nicolas P."/>
            <person name="Bossy R."/>
            <person name="Caron C."/>
            <person name="Bessieres P."/>
            <person name="Gibrat J.-F."/>
            <person name="Claverol S."/>
            <person name="Dumetz F."/>
            <person name="Le Henaff M."/>
            <person name="Benmansour A."/>
        </authorList>
    </citation>
    <scope>NUCLEOTIDE SEQUENCE [LARGE SCALE GENOMIC DNA]</scope>
    <source>
        <strain>ATCC 49511 / DSM 21280 / CIP 103535 / JIP02/86</strain>
    </source>
</reference>
<evidence type="ECO:0000255" key="1">
    <source>
        <dbReference type="HAMAP-Rule" id="MF_01416"/>
    </source>
</evidence>
<comment type="function">
    <text evidence="1">F(1)F(0) ATP synthase produces ATP from ADP in the presence of a proton or sodium gradient. F-type ATPases consist of two structural domains, F(1) containing the extramembraneous catalytic core and F(0) containing the membrane proton channel, linked together by a central stalk and a peripheral stalk. During catalysis, ATP synthesis in the catalytic domain of F(1) is coupled via a rotary mechanism of the central stalk subunits to proton translocation.</text>
</comment>
<comment type="function">
    <text evidence="1">This protein is part of the stalk that links CF(0) to CF(1). It either transmits conformational changes from CF(0) to CF(1) or is implicated in proton conduction.</text>
</comment>
<comment type="subunit">
    <text evidence="1">F-type ATPases have 2 components, F(1) - the catalytic core - and F(0) - the membrane proton channel. F(1) has five subunits: alpha(3), beta(3), gamma(1), delta(1), epsilon(1). F(0) has three main subunits: a(1), b(2) and c(10-14). The alpha and beta chains form an alternating ring which encloses part of the gamma chain. F(1) is attached to F(0) by a central stalk formed by the gamma and epsilon chains, while a peripheral stalk is formed by the delta and b chains.</text>
</comment>
<comment type="subcellular location">
    <subcellularLocation>
        <location evidence="1">Cell inner membrane</location>
        <topology evidence="1">Peripheral membrane protein</topology>
    </subcellularLocation>
</comment>
<comment type="similarity">
    <text evidence="1">Belongs to the ATPase delta chain family.</text>
</comment>
<organism>
    <name type="scientific">Flavobacterium psychrophilum (strain ATCC 49511 / DSM 21280 / CIP 103535 / JIP02/86)</name>
    <dbReference type="NCBI Taxonomy" id="402612"/>
    <lineage>
        <taxon>Bacteria</taxon>
        <taxon>Pseudomonadati</taxon>
        <taxon>Bacteroidota</taxon>
        <taxon>Flavobacteriia</taxon>
        <taxon>Flavobacteriales</taxon>
        <taxon>Flavobacteriaceae</taxon>
        <taxon>Flavobacterium</taxon>
    </lineage>
</organism>
<proteinExistence type="inferred from homology"/>
<name>ATPD_FLAPJ</name>
<accession>A6H2D8</accession>
<feature type="chain" id="PRO_1000184712" description="ATP synthase subunit delta">
    <location>
        <begin position="1"/>
        <end position="177"/>
    </location>
</feature>
<dbReference type="EMBL" id="AM398681">
    <property type="protein sequence ID" value="CAL44512.1"/>
    <property type="molecule type" value="Genomic_DNA"/>
</dbReference>
<dbReference type="RefSeq" id="WP_011964546.1">
    <property type="nucleotide sequence ID" value="NC_009613.3"/>
</dbReference>
<dbReference type="RefSeq" id="YP_001297313.1">
    <property type="nucleotide sequence ID" value="NC_009613.3"/>
</dbReference>
<dbReference type="SMR" id="A6H2D8"/>
<dbReference type="STRING" id="402612.FP2459"/>
<dbReference type="EnsemblBacteria" id="CAL44512">
    <property type="protein sequence ID" value="CAL44512"/>
    <property type="gene ID" value="FP2459"/>
</dbReference>
<dbReference type="GeneID" id="66553569"/>
<dbReference type="KEGG" id="fps:FP2459"/>
<dbReference type="PATRIC" id="fig|402612.5.peg.2517"/>
<dbReference type="eggNOG" id="COG0712">
    <property type="taxonomic scope" value="Bacteria"/>
</dbReference>
<dbReference type="HOGENOM" id="CLU_085114_4_1_10"/>
<dbReference type="OrthoDB" id="9802471at2"/>
<dbReference type="Proteomes" id="UP000006394">
    <property type="component" value="Chromosome"/>
</dbReference>
<dbReference type="GO" id="GO:0005886">
    <property type="term" value="C:plasma membrane"/>
    <property type="evidence" value="ECO:0007669"/>
    <property type="project" value="UniProtKB-SubCell"/>
</dbReference>
<dbReference type="GO" id="GO:0045259">
    <property type="term" value="C:proton-transporting ATP synthase complex"/>
    <property type="evidence" value="ECO:0007669"/>
    <property type="project" value="UniProtKB-KW"/>
</dbReference>
<dbReference type="GO" id="GO:0046933">
    <property type="term" value="F:proton-transporting ATP synthase activity, rotational mechanism"/>
    <property type="evidence" value="ECO:0007669"/>
    <property type="project" value="UniProtKB-UniRule"/>
</dbReference>
<dbReference type="Gene3D" id="1.10.520.20">
    <property type="entry name" value="N-terminal domain of the delta subunit of the F1F0-ATP synthase"/>
    <property type="match status" value="1"/>
</dbReference>
<dbReference type="HAMAP" id="MF_01416">
    <property type="entry name" value="ATP_synth_delta_bact"/>
    <property type="match status" value="1"/>
</dbReference>
<dbReference type="InterPro" id="IPR026015">
    <property type="entry name" value="ATP_synth_OSCP/delta_N_sf"/>
</dbReference>
<dbReference type="InterPro" id="IPR020781">
    <property type="entry name" value="ATPase_OSCP/d_CS"/>
</dbReference>
<dbReference type="InterPro" id="IPR000711">
    <property type="entry name" value="ATPase_OSCP/dsu"/>
</dbReference>
<dbReference type="NCBIfam" id="TIGR01145">
    <property type="entry name" value="ATP_synt_delta"/>
    <property type="match status" value="1"/>
</dbReference>
<dbReference type="PANTHER" id="PTHR11910">
    <property type="entry name" value="ATP SYNTHASE DELTA CHAIN"/>
    <property type="match status" value="1"/>
</dbReference>
<dbReference type="Pfam" id="PF00213">
    <property type="entry name" value="OSCP"/>
    <property type="match status" value="1"/>
</dbReference>
<dbReference type="PRINTS" id="PR00125">
    <property type="entry name" value="ATPASEDELTA"/>
</dbReference>
<dbReference type="SUPFAM" id="SSF47928">
    <property type="entry name" value="N-terminal domain of the delta subunit of the F1F0-ATP synthase"/>
    <property type="match status" value="1"/>
</dbReference>
<dbReference type="PROSITE" id="PS00389">
    <property type="entry name" value="ATPASE_DELTA"/>
    <property type="match status" value="1"/>
</dbReference>
<sequence length="177" mass="19489">MSSTRAAIRYAKAIIEIATSKNAANEVSNDMFLIATTINSNSELDTFIQNPTIKVEAKENALLEVFANTNEVTKSLFHLLFENKRFEILGAIASEYNKLFDEINGIQVAKVTTAIAMDANLEAKVKAKIATFSDKKVTIENTVDASIIGGFILRIGDKQYNASVANRLQVLKRELSN</sequence>
<gene>
    <name evidence="1" type="primary">atpH</name>
    <name type="ordered locus">FP2459</name>
</gene>